<reference key="1">
    <citation type="journal article" date="2005" name="Nature">
        <title>Sequencing of Aspergillus nidulans and comparative analysis with A. fumigatus and A. oryzae.</title>
        <authorList>
            <person name="Galagan J.E."/>
            <person name="Calvo S.E."/>
            <person name="Cuomo C."/>
            <person name="Ma L.-J."/>
            <person name="Wortman J.R."/>
            <person name="Batzoglou S."/>
            <person name="Lee S.-I."/>
            <person name="Bastuerkmen M."/>
            <person name="Spevak C.C."/>
            <person name="Clutterbuck J."/>
            <person name="Kapitonov V."/>
            <person name="Jurka J."/>
            <person name="Scazzocchio C."/>
            <person name="Farman M.L."/>
            <person name="Butler J."/>
            <person name="Purcell S."/>
            <person name="Harris S."/>
            <person name="Braus G.H."/>
            <person name="Draht O."/>
            <person name="Busch S."/>
            <person name="D'Enfert C."/>
            <person name="Bouchier C."/>
            <person name="Goldman G.H."/>
            <person name="Bell-Pedersen D."/>
            <person name="Griffiths-Jones S."/>
            <person name="Doonan J.H."/>
            <person name="Yu J."/>
            <person name="Vienken K."/>
            <person name="Pain A."/>
            <person name="Freitag M."/>
            <person name="Selker E.U."/>
            <person name="Archer D.B."/>
            <person name="Penalva M.A."/>
            <person name="Oakley B.R."/>
            <person name="Momany M."/>
            <person name="Tanaka T."/>
            <person name="Kumagai T."/>
            <person name="Asai K."/>
            <person name="Machida M."/>
            <person name="Nierman W.C."/>
            <person name="Denning D.W."/>
            <person name="Caddick M.X."/>
            <person name="Hynes M."/>
            <person name="Paoletti M."/>
            <person name="Fischer R."/>
            <person name="Miller B.L."/>
            <person name="Dyer P.S."/>
            <person name="Sachs M.S."/>
            <person name="Osmani S.A."/>
            <person name="Birren B.W."/>
        </authorList>
    </citation>
    <scope>NUCLEOTIDE SEQUENCE [LARGE SCALE GENOMIC DNA]</scope>
    <source>
        <strain>FGSC A4 / ATCC 38163 / CBS 112.46 / NRRL 194 / M139</strain>
    </source>
</reference>
<reference key="2">
    <citation type="journal article" date="2009" name="Fungal Genet. Biol.">
        <title>The 2008 update of the Aspergillus nidulans genome annotation: a community effort.</title>
        <authorList>
            <person name="Wortman J.R."/>
            <person name="Gilsenan J.M."/>
            <person name="Joardar V."/>
            <person name="Deegan J."/>
            <person name="Clutterbuck J."/>
            <person name="Andersen M.R."/>
            <person name="Archer D."/>
            <person name="Bencina M."/>
            <person name="Braus G."/>
            <person name="Coutinho P."/>
            <person name="von Dohren H."/>
            <person name="Doonan J."/>
            <person name="Driessen A.J."/>
            <person name="Durek P."/>
            <person name="Espeso E."/>
            <person name="Fekete E."/>
            <person name="Flipphi M."/>
            <person name="Estrada C.G."/>
            <person name="Geysens S."/>
            <person name="Goldman G."/>
            <person name="de Groot P.W."/>
            <person name="Hansen K."/>
            <person name="Harris S.D."/>
            <person name="Heinekamp T."/>
            <person name="Helmstaedt K."/>
            <person name="Henrissat B."/>
            <person name="Hofmann G."/>
            <person name="Homan T."/>
            <person name="Horio T."/>
            <person name="Horiuchi H."/>
            <person name="James S."/>
            <person name="Jones M."/>
            <person name="Karaffa L."/>
            <person name="Karanyi Z."/>
            <person name="Kato M."/>
            <person name="Keller N."/>
            <person name="Kelly D.E."/>
            <person name="Kiel J.A."/>
            <person name="Kim J.M."/>
            <person name="van der Klei I.J."/>
            <person name="Klis F.M."/>
            <person name="Kovalchuk A."/>
            <person name="Krasevec N."/>
            <person name="Kubicek C.P."/>
            <person name="Liu B."/>
            <person name="Maccabe A."/>
            <person name="Meyer V."/>
            <person name="Mirabito P."/>
            <person name="Miskei M."/>
            <person name="Mos M."/>
            <person name="Mullins J."/>
            <person name="Nelson D.R."/>
            <person name="Nielsen J."/>
            <person name="Oakley B.R."/>
            <person name="Osmani S.A."/>
            <person name="Pakula T."/>
            <person name="Paszewski A."/>
            <person name="Paulsen I."/>
            <person name="Pilsyk S."/>
            <person name="Pocsi I."/>
            <person name="Punt P.J."/>
            <person name="Ram A.F."/>
            <person name="Ren Q."/>
            <person name="Robellet X."/>
            <person name="Robson G."/>
            <person name="Seiboth B."/>
            <person name="van Solingen P."/>
            <person name="Specht T."/>
            <person name="Sun J."/>
            <person name="Taheri-Talesh N."/>
            <person name="Takeshita N."/>
            <person name="Ussery D."/>
            <person name="vanKuyk P.A."/>
            <person name="Visser H."/>
            <person name="van de Vondervoort P.J."/>
            <person name="de Vries R.P."/>
            <person name="Walton J."/>
            <person name="Xiang X."/>
            <person name="Xiong Y."/>
            <person name="Zeng A.P."/>
            <person name="Brandt B.W."/>
            <person name="Cornell M.J."/>
            <person name="van den Hondel C.A."/>
            <person name="Visser J."/>
            <person name="Oliver S.G."/>
            <person name="Turner G."/>
        </authorList>
    </citation>
    <scope>GENOME REANNOTATION</scope>
    <source>
        <strain>FGSC A4 / ATCC 38163 / CBS 112.46 / NRRL 194 / M139</strain>
    </source>
</reference>
<feature type="chain" id="PRO_0000365059" description="Eukaryotic translation initiation factor 3 subunit K">
    <location>
        <begin position="1"/>
        <end position="250"/>
    </location>
</feature>
<feature type="domain" description="PCI" evidence="2">
    <location>
        <begin position="46"/>
        <end position="229"/>
    </location>
</feature>
<name>EIF3K_EMENI</name>
<dbReference type="EMBL" id="AACD01000051">
    <property type="protein sequence ID" value="EAA63626.1"/>
    <property type="molecule type" value="Genomic_DNA"/>
</dbReference>
<dbReference type="EMBL" id="BN001306">
    <property type="protein sequence ID" value="CBF83491.1"/>
    <property type="molecule type" value="Genomic_DNA"/>
</dbReference>
<dbReference type="RefSeq" id="XP_660659.1">
    <property type="nucleotide sequence ID" value="XM_655567.1"/>
</dbReference>
<dbReference type="SMR" id="Q5B8S5"/>
<dbReference type="STRING" id="227321.Q5B8S5"/>
<dbReference type="EnsemblFungi" id="CBF83491">
    <property type="protein sequence ID" value="CBF83491"/>
    <property type="gene ID" value="ANIA_03055"/>
</dbReference>
<dbReference type="KEGG" id="ani:ANIA_03055"/>
<dbReference type="VEuPathDB" id="FungiDB:AN3055"/>
<dbReference type="eggNOG" id="KOG3252">
    <property type="taxonomic scope" value="Eukaryota"/>
</dbReference>
<dbReference type="HOGENOM" id="CLU_076723_0_1_1"/>
<dbReference type="InParanoid" id="Q5B8S5"/>
<dbReference type="OMA" id="GDDLCAD"/>
<dbReference type="OrthoDB" id="337745at2759"/>
<dbReference type="Proteomes" id="UP000000560">
    <property type="component" value="Chromosome VI"/>
</dbReference>
<dbReference type="GO" id="GO:0016282">
    <property type="term" value="C:eukaryotic 43S preinitiation complex"/>
    <property type="evidence" value="ECO:0007669"/>
    <property type="project" value="UniProtKB-UniRule"/>
</dbReference>
<dbReference type="GO" id="GO:0033290">
    <property type="term" value="C:eukaryotic 48S preinitiation complex"/>
    <property type="evidence" value="ECO:0007669"/>
    <property type="project" value="UniProtKB-UniRule"/>
</dbReference>
<dbReference type="GO" id="GO:0005852">
    <property type="term" value="C:eukaryotic translation initiation factor 3 complex"/>
    <property type="evidence" value="ECO:0000318"/>
    <property type="project" value="GO_Central"/>
</dbReference>
<dbReference type="GO" id="GO:0043022">
    <property type="term" value="F:ribosome binding"/>
    <property type="evidence" value="ECO:0007669"/>
    <property type="project" value="InterPro"/>
</dbReference>
<dbReference type="GO" id="GO:0003723">
    <property type="term" value="F:RNA binding"/>
    <property type="evidence" value="ECO:0007669"/>
    <property type="project" value="UniProtKB-UniRule"/>
</dbReference>
<dbReference type="GO" id="GO:0003743">
    <property type="term" value="F:translation initiation factor activity"/>
    <property type="evidence" value="ECO:0007669"/>
    <property type="project" value="UniProtKB-UniRule"/>
</dbReference>
<dbReference type="GO" id="GO:0001732">
    <property type="term" value="P:formation of cytoplasmic translation initiation complex"/>
    <property type="evidence" value="ECO:0007669"/>
    <property type="project" value="UniProtKB-UniRule"/>
</dbReference>
<dbReference type="GO" id="GO:0006446">
    <property type="term" value="P:regulation of translational initiation"/>
    <property type="evidence" value="ECO:0007669"/>
    <property type="project" value="InterPro"/>
</dbReference>
<dbReference type="FunFam" id="1.10.10.10:FF:000389">
    <property type="entry name" value="Eukaryotic translation initiation factor 3 subunit K"/>
    <property type="match status" value="1"/>
</dbReference>
<dbReference type="FunFam" id="1.25.40.250:FF:000003">
    <property type="entry name" value="Eukaryotic translation initiation factor 3 subunit K"/>
    <property type="match status" value="1"/>
</dbReference>
<dbReference type="Gene3D" id="1.25.40.250">
    <property type="entry name" value="ARM repeat, domain 1"/>
    <property type="match status" value="1"/>
</dbReference>
<dbReference type="Gene3D" id="1.10.10.10">
    <property type="entry name" value="Winged helix-like DNA-binding domain superfamily/Winged helix DNA-binding domain"/>
    <property type="match status" value="1"/>
</dbReference>
<dbReference type="HAMAP" id="MF_03010">
    <property type="entry name" value="eIF3k"/>
    <property type="match status" value="1"/>
</dbReference>
<dbReference type="InterPro" id="IPR016024">
    <property type="entry name" value="ARM-type_fold"/>
</dbReference>
<dbReference type="InterPro" id="IPR033464">
    <property type="entry name" value="CSN8_PSD8_EIF3K"/>
</dbReference>
<dbReference type="InterPro" id="IPR009374">
    <property type="entry name" value="eIF3k"/>
</dbReference>
<dbReference type="InterPro" id="IPR000717">
    <property type="entry name" value="PCI_dom"/>
</dbReference>
<dbReference type="InterPro" id="IPR016020">
    <property type="entry name" value="Transl_init_fac_sub12_N_euk"/>
</dbReference>
<dbReference type="InterPro" id="IPR036388">
    <property type="entry name" value="WH-like_DNA-bd_sf"/>
</dbReference>
<dbReference type="InterPro" id="IPR036390">
    <property type="entry name" value="WH_DNA-bd_sf"/>
</dbReference>
<dbReference type="PANTHER" id="PTHR13022">
    <property type="entry name" value="EUKARYOTIC TRANSLATION INITIATION FACTOR 3 SUBUNIT 11"/>
    <property type="match status" value="1"/>
</dbReference>
<dbReference type="PANTHER" id="PTHR13022:SF0">
    <property type="entry name" value="EUKARYOTIC TRANSLATION INITIATION FACTOR 3 SUBUNIT K"/>
    <property type="match status" value="1"/>
</dbReference>
<dbReference type="Pfam" id="PF10075">
    <property type="entry name" value="CSN8_PSD8_EIF3K"/>
    <property type="match status" value="1"/>
</dbReference>
<dbReference type="SUPFAM" id="SSF48371">
    <property type="entry name" value="ARM repeat"/>
    <property type="match status" value="1"/>
</dbReference>
<dbReference type="SUPFAM" id="SSF46785">
    <property type="entry name" value="Winged helix' DNA-binding domain"/>
    <property type="match status" value="1"/>
</dbReference>
<dbReference type="PROSITE" id="PS50250">
    <property type="entry name" value="PCI"/>
    <property type="match status" value="1"/>
</dbReference>
<gene>
    <name type="ORF">AN3055</name>
</gene>
<sequence>MGVAIDKCETRPANIEAILSGLDRYNPETTTVFQDYVVQQCEDRTFDCYANLALLKLYQFNPHLLQPETVTNILVKALTVFPSPAFSLCLALLPAYTQPFPSSEAEATAAQMSDFVESVQKLARLSSLLESAQYAQFWSTLNSDDLYADLVADVAGFEELVRIRIAVEVGKAFREVNAEVLEQWLDVRNSEALEKFVTEVCSWEVDKSGSATVVKVPTNKENEARSEVKSERVGVDMFGRVIRRGFEQAA</sequence>
<keyword id="KW-0963">Cytoplasm</keyword>
<keyword id="KW-0396">Initiation factor</keyword>
<keyword id="KW-0648">Protein biosynthesis</keyword>
<keyword id="KW-1185">Reference proteome</keyword>
<evidence type="ECO:0000255" key="1">
    <source>
        <dbReference type="HAMAP-Rule" id="MF_03010"/>
    </source>
</evidence>
<evidence type="ECO:0000255" key="2">
    <source>
        <dbReference type="PROSITE-ProRule" id="PRU01185"/>
    </source>
</evidence>
<comment type="function">
    <text evidence="1">Component of the eukaryotic translation initiation factor 3 (eIF-3) complex, which is involved in protein synthesis of a specialized repertoire of mRNAs and, together with other initiation factors, stimulates binding of mRNA and methionyl-tRNAi to the 40S ribosome. The eIF-3 complex specifically targets and initiates translation of a subset of mRNAs involved in cell proliferation.</text>
</comment>
<comment type="subunit">
    <text evidence="1">Component of the eukaryotic translation initiation factor 3 (eIF-3) complex.</text>
</comment>
<comment type="subcellular location">
    <subcellularLocation>
        <location evidence="1">Cytoplasm</location>
    </subcellularLocation>
</comment>
<comment type="similarity">
    <text evidence="1">Belongs to the eIF-3 subunit K family.</text>
</comment>
<accession>Q5B8S5</accession>
<accession>C8VIR8</accession>
<organism>
    <name type="scientific">Emericella nidulans (strain FGSC A4 / ATCC 38163 / CBS 112.46 / NRRL 194 / M139)</name>
    <name type="common">Aspergillus nidulans</name>
    <dbReference type="NCBI Taxonomy" id="227321"/>
    <lineage>
        <taxon>Eukaryota</taxon>
        <taxon>Fungi</taxon>
        <taxon>Dikarya</taxon>
        <taxon>Ascomycota</taxon>
        <taxon>Pezizomycotina</taxon>
        <taxon>Eurotiomycetes</taxon>
        <taxon>Eurotiomycetidae</taxon>
        <taxon>Eurotiales</taxon>
        <taxon>Aspergillaceae</taxon>
        <taxon>Aspergillus</taxon>
        <taxon>Aspergillus subgen. Nidulantes</taxon>
    </lineage>
</organism>
<proteinExistence type="inferred from homology"/>
<protein>
    <recommendedName>
        <fullName evidence="1">Eukaryotic translation initiation factor 3 subunit K</fullName>
        <shortName evidence="1">eIF3k</shortName>
    </recommendedName>
    <alternativeName>
        <fullName evidence="1">eIF-3 p25</fullName>
    </alternativeName>
</protein>